<accession>Q1IZ02</accession>
<comment type="function">
    <text evidence="2">One of the essential components for the initiation of protein synthesis. Protects formylmethionyl-tRNA from spontaneous hydrolysis and promotes its binding to the 30S ribosomal subunits. Also involved in the hydrolysis of GTP during the formation of the 70S ribosomal complex.</text>
</comment>
<comment type="subcellular location">
    <subcellularLocation>
        <location evidence="2">Cytoplasm</location>
    </subcellularLocation>
</comment>
<comment type="similarity">
    <text evidence="2">Belongs to the TRAFAC class translation factor GTPase superfamily. Classic translation factor GTPase family. IF-2 subfamily.</text>
</comment>
<protein>
    <recommendedName>
        <fullName evidence="2">Translation initiation factor IF-2</fullName>
    </recommendedName>
</protein>
<organism>
    <name type="scientific">Deinococcus geothermalis (strain DSM 11300 / CIP 105573 / AG-3a)</name>
    <dbReference type="NCBI Taxonomy" id="319795"/>
    <lineage>
        <taxon>Bacteria</taxon>
        <taxon>Thermotogati</taxon>
        <taxon>Deinococcota</taxon>
        <taxon>Deinococci</taxon>
        <taxon>Deinococcales</taxon>
        <taxon>Deinococcaceae</taxon>
        <taxon>Deinococcus</taxon>
    </lineage>
</organism>
<dbReference type="EMBL" id="CP000359">
    <property type="protein sequence ID" value="ABF45532.1"/>
    <property type="molecule type" value="Genomic_DNA"/>
</dbReference>
<dbReference type="RefSeq" id="WP_011530369.1">
    <property type="nucleotide sequence ID" value="NC_008025.1"/>
</dbReference>
<dbReference type="SMR" id="Q1IZ02"/>
<dbReference type="STRING" id="319795.Dgeo_1236"/>
<dbReference type="KEGG" id="dge:Dgeo_1236"/>
<dbReference type="eggNOG" id="COG0532">
    <property type="taxonomic scope" value="Bacteria"/>
</dbReference>
<dbReference type="HOGENOM" id="CLU_006301_5_2_0"/>
<dbReference type="Proteomes" id="UP000002431">
    <property type="component" value="Chromosome"/>
</dbReference>
<dbReference type="GO" id="GO:0005829">
    <property type="term" value="C:cytosol"/>
    <property type="evidence" value="ECO:0007669"/>
    <property type="project" value="TreeGrafter"/>
</dbReference>
<dbReference type="GO" id="GO:0005525">
    <property type="term" value="F:GTP binding"/>
    <property type="evidence" value="ECO:0007669"/>
    <property type="project" value="UniProtKB-KW"/>
</dbReference>
<dbReference type="GO" id="GO:0003924">
    <property type="term" value="F:GTPase activity"/>
    <property type="evidence" value="ECO:0007669"/>
    <property type="project" value="UniProtKB-UniRule"/>
</dbReference>
<dbReference type="GO" id="GO:0003743">
    <property type="term" value="F:translation initiation factor activity"/>
    <property type="evidence" value="ECO:0007669"/>
    <property type="project" value="UniProtKB-UniRule"/>
</dbReference>
<dbReference type="CDD" id="cd01887">
    <property type="entry name" value="IF2_eIF5B"/>
    <property type="match status" value="1"/>
</dbReference>
<dbReference type="CDD" id="cd03702">
    <property type="entry name" value="IF2_mtIF2_II"/>
    <property type="match status" value="1"/>
</dbReference>
<dbReference type="CDD" id="cd03692">
    <property type="entry name" value="mtIF2_IVc"/>
    <property type="match status" value="1"/>
</dbReference>
<dbReference type="FunFam" id="2.40.30.10:FF:000007">
    <property type="entry name" value="Translation initiation factor IF-2"/>
    <property type="match status" value="1"/>
</dbReference>
<dbReference type="FunFam" id="2.40.30.10:FF:000008">
    <property type="entry name" value="Translation initiation factor IF-2"/>
    <property type="match status" value="1"/>
</dbReference>
<dbReference type="FunFam" id="3.40.50.10050:FF:000001">
    <property type="entry name" value="Translation initiation factor IF-2"/>
    <property type="match status" value="1"/>
</dbReference>
<dbReference type="FunFam" id="3.40.50.300:FF:000019">
    <property type="entry name" value="Translation initiation factor IF-2"/>
    <property type="match status" value="1"/>
</dbReference>
<dbReference type="Gene3D" id="1.10.10.2480">
    <property type="match status" value="1"/>
</dbReference>
<dbReference type="Gene3D" id="3.40.50.300">
    <property type="entry name" value="P-loop containing nucleotide triphosphate hydrolases"/>
    <property type="match status" value="1"/>
</dbReference>
<dbReference type="Gene3D" id="2.40.30.10">
    <property type="entry name" value="Translation factors"/>
    <property type="match status" value="2"/>
</dbReference>
<dbReference type="Gene3D" id="3.40.50.10050">
    <property type="entry name" value="Translation initiation factor IF- 2, domain 3"/>
    <property type="match status" value="1"/>
</dbReference>
<dbReference type="HAMAP" id="MF_00100_B">
    <property type="entry name" value="IF_2_B"/>
    <property type="match status" value="1"/>
</dbReference>
<dbReference type="InterPro" id="IPR053905">
    <property type="entry name" value="EF-G-like_DII"/>
</dbReference>
<dbReference type="InterPro" id="IPR044145">
    <property type="entry name" value="IF2_II"/>
</dbReference>
<dbReference type="InterPro" id="IPR006847">
    <property type="entry name" value="IF2_N"/>
</dbReference>
<dbReference type="InterPro" id="IPR027417">
    <property type="entry name" value="P-loop_NTPase"/>
</dbReference>
<dbReference type="InterPro" id="IPR005225">
    <property type="entry name" value="Small_GTP-bd"/>
</dbReference>
<dbReference type="InterPro" id="IPR000795">
    <property type="entry name" value="T_Tr_GTP-bd_dom"/>
</dbReference>
<dbReference type="InterPro" id="IPR000178">
    <property type="entry name" value="TF_IF2_bacterial-like"/>
</dbReference>
<dbReference type="InterPro" id="IPR015760">
    <property type="entry name" value="TIF_IF2"/>
</dbReference>
<dbReference type="InterPro" id="IPR023115">
    <property type="entry name" value="TIF_IF2_dom3"/>
</dbReference>
<dbReference type="InterPro" id="IPR036925">
    <property type="entry name" value="TIF_IF2_dom3_sf"/>
</dbReference>
<dbReference type="InterPro" id="IPR009000">
    <property type="entry name" value="Transl_B-barrel_sf"/>
</dbReference>
<dbReference type="NCBIfam" id="TIGR00487">
    <property type="entry name" value="IF-2"/>
    <property type="match status" value="1"/>
</dbReference>
<dbReference type="NCBIfam" id="TIGR00231">
    <property type="entry name" value="small_GTP"/>
    <property type="match status" value="1"/>
</dbReference>
<dbReference type="PANTHER" id="PTHR43381:SF5">
    <property type="entry name" value="TR-TYPE G DOMAIN-CONTAINING PROTEIN"/>
    <property type="match status" value="1"/>
</dbReference>
<dbReference type="PANTHER" id="PTHR43381">
    <property type="entry name" value="TRANSLATION INITIATION FACTOR IF-2-RELATED"/>
    <property type="match status" value="1"/>
</dbReference>
<dbReference type="Pfam" id="PF22042">
    <property type="entry name" value="EF-G_D2"/>
    <property type="match status" value="1"/>
</dbReference>
<dbReference type="Pfam" id="PF00009">
    <property type="entry name" value="GTP_EFTU"/>
    <property type="match status" value="1"/>
</dbReference>
<dbReference type="Pfam" id="PF11987">
    <property type="entry name" value="IF-2"/>
    <property type="match status" value="1"/>
</dbReference>
<dbReference type="Pfam" id="PF04760">
    <property type="entry name" value="IF2_N"/>
    <property type="match status" value="1"/>
</dbReference>
<dbReference type="SUPFAM" id="SSF52156">
    <property type="entry name" value="Initiation factor IF2/eIF5b, domain 3"/>
    <property type="match status" value="1"/>
</dbReference>
<dbReference type="SUPFAM" id="SSF52540">
    <property type="entry name" value="P-loop containing nucleoside triphosphate hydrolases"/>
    <property type="match status" value="1"/>
</dbReference>
<dbReference type="SUPFAM" id="SSF50447">
    <property type="entry name" value="Translation proteins"/>
    <property type="match status" value="2"/>
</dbReference>
<dbReference type="PROSITE" id="PS51722">
    <property type="entry name" value="G_TR_2"/>
    <property type="match status" value="1"/>
</dbReference>
<dbReference type="PROSITE" id="PS01176">
    <property type="entry name" value="IF2"/>
    <property type="match status" value="1"/>
</dbReference>
<name>IF2_DEIGD</name>
<sequence length="601" mass="64583">MSKVRIYTLAKDLGVDNAKMLEILDGLGVAYKSVSSTIEEDTVELIKQILEEEGHTASAEPAPAQASGSPASPAQTEAQEAPQPTATATAEREPAAPPARELPHRAPVVTIMGHVDHGKTSLLDYIRKTKVAAKEAGGITQHVGAFEAKTSKGKIVFIDTPGHEAFTTIRARGANVADIAVIVIAADDSLMPQTREAIAHAQAAKVPMIVAINKVDLPQADPEKVKTDLTQLNLVPEEYGGDLIVVPVSAKTGEGVEDLLEYISLTAELEDLRADPQGEFSGVIIESRVDRQAGVLATVMVQEGTLHVGDFLVVGENYGKVKAMTDSNGGRIKEAGPSTPVQVLGFSEAPSSGEKVVSVKNEHAARELVAQRVETRREAENARVQRKKTLEEMMGPLGETRTVNLILRADTQGSLEAIQGILARKETEDVKLNVMLAGIGSPTEGDVLLASTADATILCFNVTASGSVKKAAEQRDIELKSFRIIYELIDEVDRLIKGNVEPVFEERPLGRAEVRMVIRHPKSGNIAGSYVTDGLLRRNAKARVLRGKQVVYEGTIVGLKRFKDDVREVQAGYECGVNLDWNDVQEGDIIEASELVEVAQA</sequence>
<reference key="1">
    <citation type="submission" date="2006-04" db="EMBL/GenBank/DDBJ databases">
        <title>Complete sequence of chromosome of Deinococcus geothermalis DSM 11300.</title>
        <authorList>
            <person name="Copeland A."/>
            <person name="Lucas S."/>
            <person name="Lapidus A."/>
            <person name="Barry K."/>
            <person name="Detter J.C."/>
            <person name="Glavina del Rio T."/>
            <person name="Hammon N."/>
            <person name="Israni S."/>
            <person name="Dalin E."/>
            <person name="Tice H."/>
            <person name="Pitluck S."/>
            <person name="Brettin T."/>
            <person name="Bruce D."/>
            <person name="Han C."/>
            <person name="Tapia R."/>
            <person name="Saunders E."/>
            <person name="Gilna P."/>
            <person name="Schmutz J."/>
            <person name="Larimer F."/>
            <person name="Land M."/>
            <person name="Hauser L."/>
            <person name="Kyrpides N."/>
            <person name="Kim E."/>
            <person name="Daly M.J."/>
            <person name="Fredrickson J.K."/>
            <person name="Makarova K.S."/>
            <person name="Gaidamakova E.K."/>
            <person name="Zhai M."/>
            <person name="Richardson P."/>
        </authorList>
    </citation>
    <scope>NUCLEOTIDE SEQUENCE [LARGE SCALE GENOMIC DNA]</scope>
    <source>
        <strain>DSM 11300 / CIP 105573 / AG-3a</strain>
    </source>
</reference>
<proteinExistence type="inferred from homology"/>
<keyword id="KW-0963">Cytoplasm</keyword>
<keyword id="KW-0342">GTP-binding</keyword>
<keyword id="KW-0396">Initiation factor</keyword>
<keyword id="KW-0547">Nucleotide-binding</keyword>
<keyword id="KW-0648">Protein biosynthesis</keyword>
<feature type="chain" id="PRO_1000008236" description="Translation initiation factor IF-2">
    <location>
        <begin position="1"/>
        <end position="601"/>
    </location>
</feature>
<feature type="domain" description="tr-type G">
    <location>
        <begin position="104"/>
        <end position="273"/>
    </location>
</feature>
<feature type="region of interest" description="Disordered" evidence="3">
    <location>
        <begin position="54"/>
        <end position="101"/>
    </location>
</feature>
<feature type="region of interest" description="G1" evidence="1">
    <location>
        <begin position="113"/>
        <end position="120"/>
    </location>
</feature>
<feature type="region of interest" description="G2" evidence="1">
    <location>
        <begin position="138"/>
        <end position="142"/>
    </location>
</feature>
<feature type="region of interest" description="G3" evidence="1">
    <location>
        <begin position="159"/>
        <end position="162"/>
    </location>
</feature>
<feature type="region of interest" description="G4" evidence="1">
    <location>
        <begin position="213"/>
        <end position="216"/>
    </location>
</feature>
<feature type="region of interest" description="G5" evidence="1">
    <location>
        <begin position="249"/>
        <end position="251"/>
    </location>
</feature>
<feature type="compositionally biased region" description="Low complexity" evidence="3">
    <location>
        <begin position="57"/>
        <end position="89"/>
    </location>
</feature>
<feature type="binding site" evidence="2">
    <location>
        <begin position="113"/>
        <end position="120"/>
    </location>
    <ligand>
        <name>GTP</name>
        <dbReference type="ChEBI" id="CHEBI:37565"/>
    </ligand>
</feature>
<feature type="binding site" evidence="2">
    <location>
        <begin position="159"/>
        <end position="163"/>
    </location>
    <ligand>
        <name>GTP</name>
        <dbReference type="ChEBI" id="CHEBI:37565"/>
    </ligand>
</feature>
<feature type="binding site" evidence="2">
    <location>
        <begin position="213"/>
        <end position="216"/>
    </location>
    <ligand>
        <name>GTP</name>
        <dbReference type="ChEBI" id="CHEBI:37565"/>
    </ligand>
</feature>
<gene>
    <name evidence="2" type="primary">infB</name>
    <name type="ordered locus">Dgeo_1236</name>
</gene>
<evidence type="ECO:0000250" key="1"/>
<evidence type="ECO:0000255" key="2">
    <source>
        <dbReference type="HAMAP-Rule" id="MF_00100"/>
    </source>
</evidence>
<evidence type="ECO:0000256" key="3">
    <source>
        <dbReference type="SAM" id="MobiDB-lite"/>
    </source>
</evidence>